<organism>
    <name type="scientific">Caulobacter sp. (strain K31)</name>
    <dbReference type="NCBI Taxonomy" id="366602"/>
    <lineage>
        <taxon>Bacteria</taxon>
        <taxon>Pseudomonadati</taxon>
        <taxon>Pseudomonadota</taxon>
        <taxon>Alphaproteobacteria</taxon>
        <taxon>Caulobacterales</taxon>
        <taxon>Caulobacteraceae</taxon>
        <taxon>Caulobacter</taxon>
    </lineage>
</organism>
<sequence>MSAVRPLRPERQAQKQARGAAARLSGRRAEVLAALWLMAKGYRILGFRLATPLGEIDLLAQRRGVLAVVEVKSRTSLEAALEAVTYEQRSRLRRAGAHIAANRAGLRDAVVRLDLIALAPGRRPRHLLNAWPNTGNDGQ</sequence>
<name>Y175_CAUSK</name>
<accession>B0T377</accession>
<protein>
    <recommendedName>
        <fullName evidence="1">UPF0102 protein Caul_0175</fullName>
    </recommendedName>
</protein>
<gene>
    <name type="ordered locus">Caul_0175</name>
</gene>
<reference key="1">
    <citation type="submission" date="2008-01" db="EMBL/GenBank/DDBJ databases">
        <title>Complete sequence of chromosome of Caulobacter sp. K31.</title>
        <authorList>
            <consortium name="US DOE Joint Genome Institute"/>
            <person name="Copeland A."/>
            <person name="Lucas S."/>
            <person name="Lapidus A."/>
            <person name="Barry K."/>
            <person name="Glavina del Rio T."/>
            <person name="Dalin E."/>
            <person name="Tice H."/>
            <person name="Pitluck S."/>
            <person name="Bruce D."/>
            <person name="Goodwin L."/>
            <person name="Thompson L.S."/>
            <person name="Brettin T."/>
            <person name="Detter J.C."/>
            <person name="Han C."/>
            <person name="Schmutz J."/>
            <person name="Larimer F."/>
            <person name="Land M."/>
            <person name="Hauser L."/>
            <person name="Kyrpides N."/>
            <person name="Kim E."/>
            <person name="Stephens C."/>
            <person name="Richardson P."/>
        </authorList>
    </citation>
    <scope>NUCLEOTIDE SEQUENCE [LARGE SCALE GENOMIC DNA]</scope>
    <source>
        <strain>K31</strain>
    </source>
</reference>
<proteinExistence type="inferred from homology"/>
<evidence type="ECO:0000255" key="1">
    <source>
        <dbReference type="HAMAP-Rule" id="MF_00048"/>
    </source>
</evidence>
<dbReference type="EMBL" id="CP000927">
    <property type="protein sequence ID" value="ABZ69312.1"/>
    <property type="molecule type" value="Genomic_DNA"/>
</dbReference>
<dbReference type="SMR" id="B0T377"/>
<dbReference type="STRING" id="366602.Caul_0175"/>
<dbReference type="KEGG" id="cak:Caul_0175"/>
<dbReference type="eggNOG" id="COG0792">
    <property type="taxonomic scope" value="Bacteria"/>
</dbReference>
<dbReference type="HOGENOM" id="CLU_115353_0_2_5"/>
<dbReference type="OrthoDB" id="9812968at2"/>
<dbReference type="GO" id="GO:0003676">
    <property type="term" value="F:nucleic acid binding"/>
    <property type="evidence" value="ECO:0007669"/>
    <property type="project" value="InterPro"/>
</dbReference>
<dbReference type="Gene3D" id="3.40.1350.10">
    <property type="match status" value="1"/>
</dbReference>
<dbReference type="HAMAP" id="MF_00048">
    <property type="entry name" value="UPF0102"/>
    <property type="match status" value="1"/>
</dbReference>
<dbReference type="InterPro" id="IPR011335">
    <property type="entry name" value="Restrct_endonuc-II-like"/>
</dbReference>
<dbReference type="InterPro" id="IPR011856">
    <property type="entry name" value="tRNA_endonuc-like_dom_sf"/>
</dbReference>
<dbReference type="InterPro" id="IPR003509">
    <property type="entry name" value="UPF0102_YraN-like"/>
</dbReference>
<dbReference type="NCBIfam" id="NF009151">
    <property type="entry name" value="PRK12497.1-5"/>
    <property type="match status" value="1"/>
</dbReference>
<dbReference type="PANTHER" id="PTHR34039">
    <property type="entry name" value="UPF0102 PROTEIN YRAN"/>
    <property type="match status" value="1"/>
</dbReference>
<dbReference type="PANTHER" id="PTHR34039:SF1">
    <property type="entry name" value="UPF0102 PROTEIN YRAN"/>
    <property type="match status" value="1"/>
</dbReference>
<dbReference type="Pfam" id="PF02021">
    <property type="entry name" value="UPF0102"/>
    <property type="match status" value="1"/>
</dbReference>
<dbReference type="SUPFAM" id="SSF52980">
    <property type="entry name" value="Restriction endonuclease-like"/>
    <property type="match status" value="1"/>
</dbReference>
<feature type="chain" id="PRO_0000336154" description="UPF0102 protein Caul_0175">
    <location>
        <begin position="1"/>
        <end position="139"/>
    </location>
</feature>
<comment type="similarity">
    <text evidence="1">Belongs to the UPF0102 family.</text>
</comment>